<evidence type="ECO:0000255" key="1">
    <source>
        <dbReference type="HAMAP-Rule" id="MF_00339"/>
    </source>
</evidence>
<comment type="function">
    <text evidence="1">Catalyzes the phosphorylation of D-fructose 6-phosphate to fructose 1,6-bisphosphate by ATP, the first committing step of glycolysis.</text>
</comment>
<comment type="catalytic activity">
    <reaction evidence="1">
        <text>beta-D-fructose 6-phosphate + ATP = beta-D-fructose 1,6-bisphosphate + ADP + H(+)</text>
        <dbReference type="Rhea" id="RHEA:16109"/>
        <dbReference type="ChEBI" id="CHEBI:15378"/>
        <dbReference type="ChEBI" id="CHEBI:30616"/>
        <dbReference type="ChEBI" id="CHEBI:32966"/>
        <dbReference type="ChEBI" id="CHEBI:57634"/>
        <dbReference type="ChEBI" id="CHEBI:456216"/>
        <dbReference type="EC" id="2.7.1.11"/>
    </reaction>
</comment>
<comment type="cofactor">
    <cofactor evidence="1">
        <name>Mg(2+)</name>
        <dbReference type="ChEBI" id="CHEBI:18420"/>
    </cofactor>
</comment>
<comment type="activity regulation">
    <text evidence="1">Allosterically activated by ADP and other diphosphonucleosides, and allosterically inhibited by phosphoenolpyruvate.</text>
</comment>
<comment type="pathway">
    <text evidence="1">Carbohydrate degradation; glycolysis; D-glyceraldehyde 3-phosphate and glycerone phosphate from D-glucose: step 3/4.</text>
</comment>
<comment type="subunit">
    <text evidence="1">Homotetramer.</text>
</comment>
<comment type="subcellular location">
    <subcellularLocation>
        <location evidence="1">Cytoplasm</location>
    </subcellularLocation>
</comment>
<comment type="similarity">
    <text evidence="1">Belongs to the phosphofructokinase type A (PFKA) family. ATP-dependent PFK group I subfamily. Prokaryotic clade 'B1' sub-subfamily.</text>
</comment>
<proteinExistence type="inferred from homology"/>
<dbReference type="EC" id="2.7.1.11" evidence="1"/>
<dbReference type="EMBL" id="AE016826">
    <property type="protein sequence ID" value="AAO27009.1"/>
    <property type="molecule type" value="Genomic_DNA"/>
</dbReference>
<dbReference type="RefSeq" id="WP_011091410.1">
    <property type="nucleotide sequence ID" value="NC_004545.1"/>
</dbReference>
<dbReference type="SMR" id="P59563"/>
<dbReference type="STRING" id="224915.bbp_284"/>
<dbReference type="KEGG" id="bab:bbp_284"/>
<dbReference type="eggNOG" id="COG0205">
    <property type="taxonomic scope" value="Bacteria"/>
</dbReference>
<dbReference type="HOGENOM" id="CLU_020655_0_1_6"/>
<dbReference type="OrthoDB" id="9802503at2"/>
<dbReference type="UniPathway" id="UPA00109">
    <property type="reaction ID" value="UER00182"/>
</dbReference>
<dbReference type="Proteomes" id="UP000000601">
    <property type="component" value="Chromosome"/>
</dbReference>
<dbReference type="GO" id="GO:0005945">
    <property type="term" value="C:6-phosphofructokinase complex"/>
    <property type="evidence" value="ECO:0007669"/>
    <property type="project" value="TreeGrafter"/>
</dbReference>
<dbReference type="GO" id="GO:0003872">
    <property type="term" value="F:6-phosphofructokinase activity"/>
    <property type="evidence" value="ECO:0007669"/>
    <property type="project" value="UniProtKB-UniRule"/>
</dbReference>
<dbReference type="GO" id="GO:0016208">
    <property type="term" value="F:AMP binding"/>
    <property type="evidence" value="ECO:0007669"/>
    <property type="project" value="TreeGrafter"/>
</dbReference>
<dbReference type="GO" id="GO:0005524">
    <property type="term" value="F:ATP binding"/>
    <property type="evidence" value="ECO:0007669"/>
    <property type="project" value="UniProtKB-KW"/>
</dbReference>
<dbReference type="GO" id="GO:0070095">
    <property type="term" value="F:fructose-6-phosphate binding"/>
    <property type="evidence" value="ECO:0007669"/>
    <property type="project" value="TreeGrafter"/>
</dbReference>
<dbReference type="GO" id="GO:0042802">
    <property type="term" value="F:identical protein binding"/>
    <property type="evidence" value="ECO:0007669"/>
    <property type="project" value="TreeGrafter"/>
</dbReference>
<dbReference type="GO" id="GO:0046872">
    <property type="term" value="F:metal ion binding"/>
    <property type="evidence" value="ECO:0007669"/>
    <property type="project" value="UniProtKB-KW"/>
</dbReference>
<dbReference type="GO" id="GO:0048029">
    <property type="term" value="F:monosaccharide binding"/>
    <property type="evidence" value="ECO:0007669"/>
    <property type="project" value="TreeGrafter"/>
</dbReference>
<dbReference type="GO" id="GO:0061621">
    <property type="term" value="P:canonical glycolysis"/>
    <property type="evidence" value="ECO:0007669"/>
    <property type="project" value="TreeGrafter"/>
</dbReference>
<dbReference type="GO" id="GO:0030388">
    <property type="term" value="P:fructose 1,6-bisphosphate metabolic process"/>
    <property type="evidence" value="ECO:0007669"/>
    <property type="project" value="TreeGrafter"/>
</dbReference>
<dbReference type="GO" id="GO:0006002">
    <property type="term" value="P:fructose 6-phosphate metabolic process"/>
    <property type="evidence" value="ECO:0007669"/>
    <property type="project" value="InterPro"/>
</dbReference>
<dbReference type="FunFam" id="3.40.50.450:FF:000001">
    <property type="entry name" value="ATP-dependent 6-phosphofructokinase"/>
    <property type="match status" value="1"/>
</dbReference>
<dbReference type="FunFam" id="3.40.50.460:FF:000002">
    <property type="entry name" value="ATP-dependent 6-phosphofructokinase"/>
    <property type="match status" value="1"/>
</dbReference>
<dbReference type="Gene3D" id="3.40.50.450">
    <property type="match status" value="1"/>
</dbReference>
<dbReference type="Gene3D" id="3.40.50.460">
    <property type="entry name" value="Phosphofructokinase domain"/>
    <property type="match status" value="1"/>
</dbReference>
<dbReference type="HAMAP" id="MF_00339">
    <property type="entry name" value="Phosphofructokinase_I_B1"/>
    <property type="match status" value="1"/>
</dbReference>
<dbReference type="InterPro" id="IPR022953">
    <property type="entry name" value="ATP_PFK"/>
</dbReference>
<dbReference type="InterPro" id="IPR012003">
    <property type="entry name" value="ATP_PFK_prok-type"/>
</dbReference>
<dbReference type="InterPro" id="IPR012828">
    <property type="entry name" value="PFKA_ATP_prok"/>
</dbReference>
<dbReference type="InterPro" id="IPR015912">
    <property type="entry name" value="Phosphofructokinase_CS"/>
</dbReference>
<dbReference type="InterPro" id="IPR000023">
    <property type="entry name" value="Phosphofructokinase_dom"/>
</dbReference>
<dbReference type="InterPro" id="IPR035966">
    <property type="entry name" value="PKF_sf"/>
</dbReference>
<dbReference type="NCBIfam" id="TIGR02482">
    <property type="entry name" value="PFKA_ATP"/>
    <property type="match status" value="1"/>
</dbReference>
<dbReference type="NCBIfam" id="NF002872">
    <property type="entry name" value="PRK03202.1"/>
    <property type="match status" value="1"/>
</dbReference>
<dbReference type="PANTHER" id="PTHR13697:SF4">
    <property type="entry name" value="ATP-DEPENDENT 6-PHOSPHOFRUCTOKINASE"/>
    <property type="match status" value="1"/>
</dbReference>
<dbReference type="PANTHER" id="PTHR13697">
    <property type="entry name" value="PHOSPHOFRUCTOKINASE"/>
    <property type="match status" value="1"/>
</dbReference>
<dbReference type="Pfam" id="PF00365">
    <property type="entry name" value="PFK"/>
    <property type="match status" value="1"/>
</dbReference>
<dbReference type="PIRSF" id="PIRSF000532">
    <property type="entry name" value="ATP_PFK_prok"/>
    <property type="match status" value="1"/>
</dbReference>
<dbReference type="PRINTS" id="PR00476">
    <property type="entry name" value="PHFRCTKINASE"/>
</dbReference>
<dbReference type="SUPFAM" id="SSF53784">
    <property type="entry name" value="Phosphofructokinase"/>
    <property type="match status" value="1"/>
</dbReference>
<dbReference type="PROSITE" id="PS00433">
    <property type="entry name" value="PHOSPHOFRUCTOKINASE"/>
    <property type="match status" value="1"/>
</dbReference>
<accession>P59563</accession>
<feature type="chain" id="PRO_0000111942" description="ATP-dependent 6-phosphofructokinase">
    <location>
        <begin position="1"/>
        <end position="320"/>
    </location>
</feature>
<feature type="active site" description="Proton acceptor" evidence="1">
    <location>
        <position position="128"/>
    </location>
</feature>
<feature type="binding site" evidence="1">
    <location>
        <position position="12"/>
    </location>
    <ligand>
        <name>ATP</name>
        <dbReference type="ChEBI" id="CHEBI:30616"/>
    </ligand>
</feature>
<feature type="binding site" evidence="1">
    <location>
        <begin position="22"/>
        <end position="26"/>
    </location>
    <ligand>
        <name>ADP</name>
        <dbReference type="ChEBI" id="CHEBI:456216"/>
        <note>allosteric activator; ligand shared between dimeric partners</note>
    </ligand>
</feature>
<feature type="binding site" evidence="1">
    <location>
        <begin position="55"/>
        <end position="60"/>
    </location>
    <ligand>
        <name>ADP</name>
        <dbReference type="ChEBI" id="CHEBI:456216"/>
        <note>allosteric activator; ligand shared between dimeric partners</note>
    </ligand>
</feature>
<feature type="binding site" evidence="1">
    <location>
        <begin position="73"/>
        <end position="74"/>
    </location>
    <ligand>
        <name>ATP</name>
        <dbReference type="ChEBI" id="CHEBI:30616"/>
    </ligand>
</feature>
<feature type="binding site" evidence="1">
    <location>
        <begin position="103"/>
        <end position="106"/>
    </location>
    <ligand>
        <name>ATP</name>
        <dbReference type="ChEBI" id="CHEBI:30616"/>
    </ligand>
</feature>
<feature type="binding site" evidence="1">
    <location>
        <position position="104"/>
    </location>
    <ligand>
        <name>Mg(2+)</name>
        <dbReference type="ChEBI" id="CHEBI:18420"/>
        <note>catalytic</note>
    </ligand>
</feature>
<feature type="binding site" description="in other chain" evidence="1">
    <location>
        <begin position="126"/>
        <end position="128"/>
    </location>
    <ligand>
        <name>substrate</name>
        <note>ligand shared between dimeric partners</note>
    </ligand>
</feature>
<feature type="binding site" description="in other chain" evidence="1">
    <location>
        <position position="155"/>
    </location>
    <ligand>
        <name>ADP</name>
        <dbReference type="ChEBI" id="CHEBI:456216"/>
        <note>allosteric activator; ligand shared between dimeric partners</note>
    </ligand>
</feature>
<feature type="binding site" evidence="1">
    <location>
        <position position="163"/>
    </location>
    <ligand>
        <name>substrate</name>
        <note>ligand shared between dimeric partners</note>
    </ligand>
</feature>
<feature type="binding site" description="in other chain" evidence="1">
    <location>
        <begin position="170"/>
        <end position="172"/>
    </location>
    <ligand>
        <name>substrate</name>
        <note>ligand shared between dimeric partners</note>
    </ligand>
</feature>
<feature type="binding site" description="in other chain" evidence="1">
    <location>
        <begin position="186"/>
        <end position="188"/>
    </location>
    <ligand>
        <name>ADP</name>
        <dbReference type="ChEBI" id="CHEBI:456216"/>
        <note>allosteric activator; ligand shared between dimeric partners</note>
    </ligand>
</feature>
<feature type="binding site" description="in other chain" evidence="1">
    <location>
        <position position="212"/>
    </location>
    <ligand>
        <name>ADP</name>
        <dbReference type="ChEBI" id="CHEBI:456216"/>
        <note>allosteric activator; ligand shared between dimeric partners</note>
    </ligand>
</feature>
<feature type="binding site" description="in other chain" evidence="1">
    <location>
        <begin position="214"/>
        <end position="216"/>
    </location>
    <ligand>
        <name>ADP</name>
        <dbReference type="ChEBI" id="CHEBI:456216"/>
        <note>allosteric activator; ligand shared between dimeric partners</note>
    </ligand>
</feature>
<feature type="binding site" description="in other chain" evidence="1">
    <location>
        <position position="223"/>
    </location>
    <ligand>
        <name>substrate</name>
        <note>ligand shared between dimeric partners</note>
    </ligand>
</feature>
<feature type="binding site" evidence="1">
    <location>
        <position position="244"/>
    </location>
    <ligand>
        <name>substrate</name>
        <note>ligand shared between dimeric partners</note>
    </ligand>
</feature>
<feature type="binding site" description="in other chain" evidence="1">
    <location>
        <begin position="250"/>
        <end position="253"/>
    </location>
    <ligand>
        <name>substrate</name>
        <note>ligand shared between dimeric partners</note>
    </ligand>
</feature>
<keyword id="KW-0021">Allosteric enzyme</keyword>
<keyword id="KW-0067">ATP-binding</keyword>
<keyword id="KW-0963">Cytoplasm</keyword>
<keyword id="KW-0324">Glycolysis</keyword>
<keyword id="KW-0418">Kinase</keyword>
<keyword id="KW-0460">Magnesium</keyword>
<keyword id="KW-0479">Metal-binding</keyword>
<keyword id="KW-0547">Nucleotide-binding</keyword>
<keyword id="KW-1185">Reference proteome</keyword>
<keyword id="KW-0808">Transferase</keyword>
<sequence>MIKRIGVLTSGGDAPGMNAAIRGVVRTALSRNLEVFGIYDGYLGLYENRMILLDRYSVSDIINKGGTFLGSARFSNFFKKDIRSIAIKNMQQRNIDFLVVIGGDGSYVGAQKLTEMGFPCISIPGTIDNDVAGTDYTIGYFTALETVVEAIDRLRDTSSSHQRISIVEVMGRNCGDLTLSAAIAGGCEFIVLPEIEFTKEELVKEIKNGIKKGKKHAIVAITEYICNVEKLAKYIQRETCRETRATILGHIQRGGAPVVYDRILASRMGEYSVDILLQGFQGRCIGTINEKMVHHDISDALKNMKRPFKFDWLKTAKQLY</sequence>
<protein>
    <recommendedName>
        <fullName evidence="1">ATP-dependent 6-phosphofructokinase</fullName>
        <shortName evidence="1">ATP-PFK</shortName>
        <shortName evidence="1">Phosphofructokinase</shortName>
        <ecNumber evidence="1">2.7.1.11</ecNumber>
    </recommendedName>
    <alternativeName>
        <fullName evidence="1">Phosphohexokinase</fullName>
    </alternativeName>
</protein>
<gene>
    <name evidence="1" type="primary">pfkA</name>
    <name type="ordered locus">bbp_284</name>
</gene>
<name>PFKA_BUCBP</name>
<organism>
    <name type="scientific">Buchnera aphidicola subsp. Baizongia pistaciae (strain Bp)</name>
    <dbReference type="NCBI Taxonomy" id="224915"/>
    <lineage>
        <taxon>Bacteria</taxon>
        <taxon>Pseudomonadati</taxon>
        <taxon>Pseudomonadota</taxon>
        <taxon>Gammaproteobacteria</taxon>
        <taxon>Enterobacterales</taxon>
        <taxon>Erwiniaceae</taxon>
        <taxon>Buchnera</taxon>
    </lineage>
</organism>
<reference key="1">
    <citation type="journal article" date="2003" name="Proc. Natl. Acad. Sci. U.S.A.">
        <title>Reductive genome evolution in Buchnera aphidicola.</title>
        <authorList>
            <person name="van Ham R.C.H.J."/>
            <person name="Kamerbeek J."/>
            <person name="Palacios C."/>
            <person name="Rausell C."/>
            <person name="Abascal F."/>
            <person name="Bastolla U."/>
            <person name="Fernandez J.M."/>
            <person name="Jimenez L."/>
            <person name="Postigo M."/>
            <person name="Silva F.J."/>
            <person name="Tamames J."/>
            <person name="Viguera E."/>
            <person name="Latorre A."/>
            <person name="Valencia A."/>
            <person name="Moran F."/>
            <person name="Moya A."/>
        </authorList>
    </citation>
    <scope>NUCLEOTIDE SEQUENCE [LARGE SCALE GENOMIC DNA]</scope>
    <source>
        <strain>Bp</strain>
    </source>
</reference>